<reference key="1">
    <citation type="journal article" date="2000" name="Science">
        <title>Complete genome sequence of Neisseria meningitidis serogroup B strain MC58.</title>
        <authorList>
            <person name="Tettelin H."/>
            <person name="Saunders N.J."/>
            <person name="Heidelberg J.F."/>
            <person name="Jeffries A.C."/>
            <person name="Nelson K.E."/>
            <person name="Eisen J.A."/>
            <person name="Ketchum K.A."/>
            <person name="Hood D.W."/>
            <person name="Peden J.F."/>
            <person name="Dodson R.J."/>
            <person name="Nelson W.C."/>
            <person name="Gwinn M.L."/>
            <person name="DeBoy R.T."/>
            <person name="Peterson J.D."/>
            <person name="Hickey E.K."/>
            <person name="Haft D.H."/>
            <person name="Salzberg S.L."/>
            <person name="White O."/>
            <person name="Fleischmann R.D."/>
            <person name="Dougherty B.A."/>
            <person name="Mason T.M."/>
            <person name="Ciecko A."/>
            <person name="Parksey D.S."/>
            <person name="Blair E."/>
            <person name="Cittone H."/>
            <person name="Clark E.B."/>
            <person name="Cotton M.D."/>
            <person name="Utterback T.R."/>
            <person name="Khouri H.M."/>
            <person name="Qin H."/>
            <person name="Vamathevan J.J."/>
            <person name="Gill J."/>
            <person name="Scarlato V."/>
            <person name="Masignani V."/>
            <person name="Pizza M."/>
            <person name="Grandi G."/>
            <person name="Sun L."/>
            <person name="Smith H.O."/>
            <person name="Fraser C.M."/>
            <person name="Moxon E.R."/>
            <person name="Rappuoli R."/>
            <person name="Venter J.C."/>
        </authorList>
    </citation>
    <scope>NUCLEOTIDE SEQUENCE [LARGE SCALE GENOMIC DNA]</scope>
    <source>
        <strain>ATCC BAA-335 / MC58</strain>
    </source>
</reference>
<reference key="2">
    <citation type="journal article" date="1993" name="Mol. Microbiol.">
        <title>Phospholipid substitution of capsular polysaccharides and mechanisms of capsule formation in Neisseria meningitidis.</title>
        <authorList>
            <person name="Frosch M."/>
            <person name="Mueller A."/>
        </authorList>
    </citation>
    <scope>NUCLEOTIDE SEQUENCE [GENOMIC DNA] OF 184-704</scope>
    <source>
        <strain>B1940 / Serogroup B</strain>
    </source>
</reference>
<dbReference type="EMBL" id="AE002098">
    <property type="protein sequence ID" value="AAF40546.1"/>
    <property type="molecule type" value="Genomic_DNA"/>
</dbReference>
<dbReference type="EMBL" id="Z13995">
    <property type="status" value="NOT_ANNOTATED_CDS"/>
    <property type="molecule type" value="Genomic_DNA"/>
</dbReference>
<dbReference type="PIR" id="D81240">
    <property type="entry name" value="D81240"/>
</dbReference>
<dbReference type="PIR" id="S32879">
    <property type="entry name" value="S32879"/>
</dbReference>
<dbReference type="RefSeq" id="NP_273145.1">
    <property type="nucleotide sequence ID" value="NC_003112.2"/>
</dbReference>
<dbReference type="RefSeq" id="WP_002224756.1">
    <property type="nucleotide sequence ID" value="NC_003112.2"/>
</dbReference>
<dbReference type="SMR" id="Q05013"/>
<dbReference type="STRING" id="122586.NMB0082"/>
<dbReference type="PaxDb" id="122586-NMB0082"/>
<dbReference type="KEGG" id="nme:NMB0082"/>
<dbReference type="PATRIC" id="fig|122586.8.peg.117"/>
<dbReference type="HOGENOM" id="CLU_025998_0_0_4"/>
<dbReference type="InParanoid" id="Q05013"/>
<dbReference type="OrthoDB" id="543755at2"/>
<dbReference type="Proteomes" id="UP000000425">
    <property type="component" value="Chromosome"/>
</dbReference>
<dbReference type="GO" id="GO:0005886">
    <property type="term" value="C:plasma membrane"/>
    <property type="evidence" value="ECO:0007669"/>
    <property type="project" value="UniProtKB-SubCell"/>
</dbReference>
<dbReference type="GO" id="GO:0000271">
    <property type="term" value="P:polysaccharide biosynthetic process"/>
    <property type="evidence" value="ECO:0007669"/>
    <property type="project" value="InterPro"/>
</dbReference>
<dbReference type="GO" id="GO:0015774">
    <property type="term" value="P:polysaccharide transport"/>
    <property type="evidence" value="ECO:0007669"/>
    <property type="project" value="UniProtKB-KW"/>
</dbReference>
<dbReference type="CDD" id="cd16440">
    <property type="entry name" value="beta_Kdo_transferase_KpsC_1"/>
    <property type="match status" value="1"/>
</dbReference>
<dbReference type="CDD" id="cd16439">
    <property type="entry name" value="beta_Kdo_transferase_KpsC_2"/>
    <property type="match status" value="1"/>
</dbReference>
<dbReference type="InterPro" id="IPR007833">
    <property type="entry name" value="Capsule_polysaccharide_synth"/>
</dbReference>
<dbReference type="Pfam" id="PF05159">
    <property type="entry name" value="Capsule_synth"/>
    <property type="match status" value="3"/>
</dbReference>
<gene>
    <name type="primary">lipA</name>
    <name type="ordered locus">NMB0082</name>
</gene>
<organism>
    <name type="scientific">Neisseria meningitidis serogroup B (strain ATCC BAA-335 / MC58)</name>
    <dbReference type="NCBI Taxonomy" id="122586"/>
    <lineage>
        <taxon>Bacteria</taxon>
        <taxon>Pseudomonadati</taxon>
        <taxon>Pseudomonadota</taxon>
        <taxon>Betaproteobacteria</taxon>
        <taxon>Neisseriales</taxon>
        <taxon>Neisseriaceae</taxon>
        <taxon>Neisseria</taxon>
    </lineage>
</organism>
<sequence>MFLFSDGLQSINNNNRRKRIVKNAYIPSRGIRKIPHLSTLLPEFHICKDGKEAEAVVGWGLRPTTHKARAFAAEHQLPFIALEDGFLRSLGLGVAGYPPYSIVYDDIGIYYDTTRPSRLEQLILAADTMPSETLAQAQQAMDFILQHHLSKYNHAPELSDDHPLRSPSKPETVLIIDQTFGDMAIQYGGADASTFELMFQTALNENPQADIWVKTHPDVLCGKKQGYLTQLAQQHRVHLLAEDINPISLLQNVDKVYCVTSQMGFEALLCGKPLTTFGLPWYAGWGVSDDRHPEINRLVQTQRRATRNLLQLFAAAYLQYSRYLNPNTGEAGSLFDVIDYLATVKRKNDKLRGELYCVGMSLWKRAVAKPFFNVPSCRLKFISSTQKLARVKLSDDARILAWGNGKEAIVRFAEQHHIPLLRMEDGFIRSVGLGSNLVPPLSLVTDDMSIYFNAETPSRLEYILQNQNFDDQDFQTALKLQKMLTENHISKYNVGSSDFTAPSTDKTVILVPGQVEDDASIRYGSPQIYRNLDLLRTVRERNPNAYIIYKPHPDVVSGNRIGHISPEDAARYADQTAEQADILTCLQYADEIHTMTSLTGFEALLRGKKVSCYGLPFYAGWGLTQDLLPIPRRSRRLELWQLIAGTLIHYPDYIHPETHQAINAETAAQILIRQKNMQKNNNGLHRGCFAKKLGKIKQLYRSFK</sequence>
<accession>Q05013</accession>
<evidence type="ECO:0000305" key="1"/>
<keyword id="KW-0997">Cell inner membrane</keyword>
<keyword id="KW-1003">Cell membrane</keyword>
<keyword id="KW-0472">Membrane</keyword>
<keyword id="KW-0625">Polysaccharide transport</keyword>
<keyword id="KW-1185">Reference proteome</keyword>
<keyword id="KW-0762">Sugar transport</keyword>
<keyword id="KW-0813">Transport</keyword>
<feature type="chain" id="PRO_0000084439" description="Capsule polysaccharide modification protein LipA">
    <location>
        <begin position="1"/>
        <end position="704"/>
    </location>
</feature>
<feature type="sequence conflict" description="In Ref. 2; Z13995." evidence="1" ref="2">
    <original>H</original>
    <variation>N</variation>
    <location>
        <position position="238"/>
    </location>
</feature>
<feature type="sequence conflict" description="In Ref. 2; Z13995." evidence="1" ref="2">
    <original>V</original>
    <variation>I</variation>
    <location>
        <position position="253"/>
    </location>
</feature>
<feature type="sequence conflict" description="In Ref. 2; Z13995." evidence="1" ref="2">
    <original>EINR</original>
    <variation>KIDS</variation>
    <location>
        <begin position="294"/>
        <end position="297"/>
    </location>
</feature>
<feature type="sequence conflict" description="In Ref. 2; Z13995." evidence="1" ref="2">
    <original>T</original>
    <variation>P</variation>
    <location>
        <position position="306"/>
    </location>
</feature>
<feature type="sequence conflict" description="In Ref. 2; Z13995." evidence="1" ref="2">
    <original>A</original>
    <variation>R</variation>
    <location>
        <position position="316"/>
    </location>
</feature>
<feature type="sequence conflict" description="In Ref. 2; Z13995." evidence="1" ref="2">
    <original>A</original>
    <variation>R</variation>
    <location>
        <position position="331"/>
    </location>
</feature>
<feature type="sequence conflict" description="In Ref. 2; Z13995." evidence="1" ref="2">
    <original>R</original>
    <variation>G</variation>
    <location>
        <position position="390"/>
    </location>
</feature>
<feature type="sequence conflict" description="In Ref. 2; Z13995." evidence="1" ref="2">
    <original>S</original>
    <variation>G</variation>
    <location>
        <position position="449"/>
    </location>
</feature>
<feature type="sequence conflict" description="In Ref. 2; Z13995." evidence="1" ref="2">
    <original>T</original>
    <variation>A</variation>
    <location>
        <position position="456"/>
    </location>
</feature>
<feature type="sequence conflict" description="In Ref. 2; Z13995." evidence="1" ref="2">
    <original>Y</original>
    <variation>H</variation>
    <location>
        <position position="462"/>
    </location>
</feature>
<proteinExistence type="predicted"/>
<name>LIPM_NEIMB</name>
<protein>
    <recommendedName>
        <fullName>Capsule polysaccharide modification protein LipA</fullName>
    </recommendedName>
</protein>
<comment type="function">
    <text>Involved in the phospholipid modification of the capsular polysaccharide, a strong requirement for its translocation to the cell surface.</text>
</comment>
<comment type="subcellular location">
    <subcellularLocation>
        <location evidence="1">Cell inner membrane</location>
        <topology evidence="1">Peripheral membrane protein</topology>
        <orientation evidence="1">Cytoplasmic side</orientation>
    </subcellularLocation>
</comment>
<comment type="sequence caution" evidence="1">
    <conflict type="frameshift">
        <sequence resource="EMBL" id="Z13995"/>
    </conflict>
</comment>